<reference key="1">
    <citation type="journal article" date="2006" name="Science">
        <title>Genomic islands and the ecology and evolution of Prochlorococcus.</title>
        <authorList>
            <person name="Coleman M.L."/>
            <person name="Sullivan M.B."/>
            <person name="Martiny A.C."/>
            <person name="Steglich C."/>
            <person name="Barry K."/>
            <person name="Delong E.F."/>
            <person name="Chisholm S.W."/>
        </authorList>
    </citation>
    <scope>NUCLEOTIDE SEQUENCE [LARGE SCALE GENOMIC DNA]</scope>
    <source>
        <strain>MIT 9312</strain>
    </source>
</reference>
<dbReference type="EMBL" id="CP000111">
    <property type="protein sequence ID" value="ABB50691.1"/>
    <property type="molecule type" value="Genomic_DNA"/>
</dbReference>
<dbReference type="RefSeq" id="WP_011377173.1">
    <property type="nucleotide sequence ID" value="NC_007577.1"/>
</dbReference>
<dbReference type="SMR" id="Q318K4"/>
<dbReference type="STRING" id="74546.PMT9312_1815"/>
<dbReference type="KEGG" id="pmi:PMT9312_1815"/>
<dbReference type="eggNOG" id="COG0257">
    <property type="taxonomic scope" value="Bacteria"/>
</dbReference>
<dbReference type="HOGENOM" id="CLU_135723_6_2_3"/>
<dbReference type="OrthoDB" id="9802520at2"/>
<dbReference type="Proteomes" id="UP000002715">
    <property type="component" value="Chromosome"/>
</dbReference>
<dbReference type="GO" id="GO:1990904">
    <property type="term" value="C:ribonucleoprotein complex"/>
    <property type="evidence" value="ECO:0007669"/>
    <property type="project" value="UniProtKB-KW"/>
</dbReference>
<dbReference type="GO" id="GO:0005840">
    <property type="term" value="C:ribosome"/>
    <property type="evidence" value="ECO:0007669"/>
    <property type="project" value="UniProtKB-KW"/>
</dbReference>
<dbReference type="GO" id="GO:0003735">
    <property type="term" value="F:structural constituent of ribosome"/>
    <property type="evidence" value="ECO:0007669"/>
    <property type="project" value="InterPro"/>
</dbReference>
<dbReference type="GO" id="GO:0006412">
    <property type="term" value="P:translation"/>
    <property type="evidence" value="ECO:0007669"/>
    <property type="project" value="UniProtKB-UniRule"/>
</dbReference>
<dbReference type="HAMAP" id="MF_00251">
    <property type="entry name" value="Ribosomal_bL36"/>
    <property type="match status" value="1"/>
</dbReference>
<dbReference type="InterPro" id="IPR000473">
    <property type="entry name" value="Ribosomal_bL36"/>
</dbReference>
<dbReference type="InterPro" id="IPR035977">
    <property type="entry name" value="Ribosomal_bL36_sp"/>
</dbReference>
<dbReference type="InterPro" id="IPR047621">
    <property type="entry name" value="Ribosomal_L36_bact"/>
</dbReference>
<dbReference type="NCBIfam" id="TIGR01022">
    <property type="entry name" value="rpmJ_bact"/>
    <property type="match status" value="1"/>
</dbReference>
<dbReference type="PANTHER" id="PTHR47781">
    <property type="entry name" value="50S RIBOSOMAL PROTEIN L36 2"/>
    <property type="match status" value="1"/>
</dbReference>
<dbReference type="PANTHER" id="PTHR47781:SF1">
    <property type="entry name" value="LARGE RIBOSOMAL SUBUNIT PROTEIN BL36B"/>
    <property type="match status" value="1"/>
</dbReference>
<dbReference type="Pfam" id="PF00444">
    <property type="entry name" value="Ribosomal_L36"/>
    <property type="match status" value="1"/>
</dbReference>
<dbReference type="SUPFAM" id="SSF57840">
    <property type="entry name" value="Ribosomal protein L36"/>
    <property type="match status" value="1"/>
</dbReference>
<keyword id="KW-0687">Ribonucleoprotein</keyword>
<keyword id="KW-0689">Ribosomal protein</keyword>
<proteinExistence type="inferred from homology"/>
<feature type="chain" id="PRO_0000302267" description="Large ribosomal subunit protein bL36">
    <location>
        <begin position="1"/>
        <end position="38"/>
    </location>
</feature>
<organism>
    <name type="scientific">Prochlorococcus marinus (strain MIT 9312)</name>
    <dbReference type="NCBI Taxonomy" id="74546"/>
    <lineage>
        <taxon>Bacteria</taxon>
        <taxon>Bacillati</taxon>
        <taxon>Cyanobacteriota</taxon>
        <taxon>Cyanophyceae</taxon>
        <taxon>Synechococcales</taxon>
        <taxon>Prochlorococcaceae</taxon>
        <taxon>Prochlorococcus</taxon>
    </lineage>
</organism>
<accession>Q318K4</accession>
<evidence type="ECO:0000255" key="1">
    <source>
        <dbReference type="HAMAP-Rule" id="MF_00251"/>
    </source>
</evidence>
<evidence type="ECO:0000305" key="2"/>
<protein>
    <recommendedName>
        <fullName evidence="1">Large ribosomal subunit protein bL36</fullName>
    </recommendedName>
    <alternativeName>
        <fullName evidence="2">50S ribosomal protein L36</fullName>
    </alternativeName>
</protein>
<sequence>MKVRSSVKKISPDDQIVRRRGKIYVINKKRPRNKQRQG</sequence>
<comment type="similarity">
    <text evidence="1">Belongs to the bacterial ribosomal protein bL36 family.</text>
</comment>
<name>RL36_PROM9</name>
<gene>
    <name evidence="1" type="primary">rpmJ</name>
    <name type="ordered locus">PMT9312_1631</name>
</gene>